<proteinExistence type="inferred from homology"/>
<feature type="chain" id="PRO_0000325925" description="CDKN2AIP N-terminal-like protein">
    <location>
        <begin position="1"/>
        <end position="116"/>
    </location>
</feature>
<feature type="domain" description="XRN2-binding (XTBD)" evidence="2">
    <location>
        <begin position="24"/>
        <end position="116"/>
    </location>
</feature>
<feature type="modified residue" description="N-acetylmethionine" evidence="1">
    <location>
        <position position="1"/>
    </location>
</feature>
<keyword id="KW-0007">Acetylation</keyword>
<keyword id="KW-1185">Reference proteome</keyword>
<organism>
    <name type="scientific">Bos taurus</name>
    <name type="common">Bovine</name>
    <dbReference type="NCBI Taxonomy" id="9913"/>
    <lineage>
        <taxon>Eukaryota</taxon>
        <taxon>Metazoa</taxon>
        <taxon>Chordata</taxon>
        <taxon>Craniata</taxon>
        <taxon>Vertebrata</taxon>
        <taxon>Euteleostomi</taxon>
        <taxon>Mammalia</taxon>
        <taxon>Eutheria</taxon>
        <taxon>Laurasiatheria</taxon>
        <taxon>Artiodactyla</taxon>
        <taxon>Ruminantia</taxon>
        <taxon>Pecora</taxon>
        <taxon>Bovidae</taxon>
        <taxon>Bovinae</taxon>
        <taxon>Bos</taxon>
    </lineage>
</organism>
<reference key="1">
    <citation type="submission" date="2006-02" db="EMBL/GenBank/DDBJ databases">
        <authorList>
            <consortium name="NIH - Mammalian Gene Collection (MGC) project"/>
        </authorList>
    </citation>
    <scope>NUCLEOTIDE SEQUENCE [LARGE SCALE MRNA]</scope>
    <source>
        <strain>Hereford</strain>
        <tissue>Hypothalamus</tissue>
    </source>
</reference>
<dbReference type="EMBL" id="BC114185">
    <property type="protein sequence ID" value="AAI14186.1"/>
    <property type="molecule type" value="mRNA"/>
</dbReference>
<dbReference type="RefSeq" id="NP_001039577.1">
    <property type="nucleotide sequence ID" value="NM_001046112.2"/>
</dbReference>
<dbReference type="SMR" id="Q24JY8"/>
<dbReference type="FunCoup" id="Q24JY8">
    <property type="interactions" value="2405"/>
</dbReference>
<dbReference type="PaxDb" id="9913-ENSBTAP00000014579"/>
<dbReference type="GeneID" id="512206"/>
<dbReference type="KEGG" id="bta:512206"/>
<dbReference type="CTD" id="91368"/>
<dbReference type="VEuPathDB" id="HostDB:ENSBTAG00000010984"/>
<dbReference type="eggNOG" id="ENOG502S4FT">
    <property type="taxonomic scope" value="Eukaryota"/>
</dbReference>
<dbReference type="InParanoid" id="Q24JY8"/>
<dbReference type="OMA" id="SDKHWEA"/>
<dbReference type="OrthoDB" id="2359216at2759"/>
<dbReference type="Proteomes" id="UP000009136">
    <property type="component" value="Chromosome 7"/>
</dbReference>
<dbReference type="Bgee" id="ENSBTAG00000010984">
    <property type="expression patterns" value="Expressed in oocyte and 105 other cell types or tissues"/>
</dbReference>
<dbReference type="InterPro" id="IPR021859">
    <property type="entry name" value="XTBD"/>
</dbReference>
<dbReference type="Pfam" id="PF11952">
    <property type="entry name" value="XTBD"/>
    <property type="match status" value="1"/>
</dbReference>
<dbReference type="PROSITE" id="PS51827">
    <property type="entry name" value="XTBD"/>
    <property type="match status" value="1"/>
</dbReference>
<gene>
    <name type="primary">CDKN2AIPNL</name>
</gene>
<protein>
    <recommendedName>
        <fullName>CDKN2AIP N-terminal-like protein</fullName>
    </recommendedName>
    <alternativeName>
        <fullName>CDKN2A-interacting protein N-terminal-like protein</fullName>
    </alternativeName>
</protein>
<name>C2AIL_BOVIN</name>
<accession>Q24JY8</accession>
<sequence>MVGGEAAAAVEELISGVRRATDFAEQFRSYSESEKQWKARMEFILRHLPDYRDPPDGGGRLDQLLSLSMVWANHLFLGCSYNKDLLDKVMEMADGIEVEDLPQFTTRSELMKKHQS</sequence>
<comment type="subunit">
    <text evidence="1">Interacts with XRN2; the interaction is direct.</text>
</comment>
<comment type="similarity">
    <text evidence="3">Belongs to the CARF family.</text>
</comment>
<evidence type="ECO:0000250" key="1">
    <source>
        <dbReference type="UniProtKB" id="Q96HQ2"/>
    </source>
</evidence>
<evidence type="ECO:0000255" key="2">
    <source>
        <dbReference type="PROSITE-ProRule" id="PRU01171"/>
    </source>
</evidence>
<evidence type="ECO:0000305" key="3"/>